<comment type="function">
    <text evidence="1">Thiol-specific peroxidase that catalyzes the reduction of hydrogen peroxide and organic hydroperoxides to water and alcohols, respectively. Plays a role in cell protection against oxidative stress by detoxifying peroxides.</text>
</comment>
<comment type="catalytic activity">
    <reaction evidence="1">
        <text>a hydroperoxide + NADH + H(+) = an alcohol + NAD(+) + H2O</text>
        <dbReference type="Rhea" id="RHEA:62628"/>
        <dbReference type="ChEBI" id="CHEBI:15377"/>
        <dbReference type="ChEBI" id="CHEBI:15378"/>
        <dbReference type="ChEBI" id="CHEBI:30879"/>
        <dbReference type="ChEBI" id="CHEBI:35924"/>
        <dbReference type="ChEBI" id="CHEBI:57540"/>
        <dbReference type="ChEBI" id="CHEBI:57945"/>
        <dbReference type="EC" id="1.11.1.26"/>
    </reaction>
</comment>
<comment type="subunit">
    <text evidence="1">Homodimer; disulfide-linked, upon oxidation. 5 homodimers assemble to form a ring-like decamer.</text>
</comment>
<comment type="subcellular location">
    <subcellularLocation>
        <location evidence="2">Cytoplasm</location>
    </subcellularLocation>
</comment>
<comment type="miscellaneous">
    <text evidence="3">The active site is a conserved redox-active cysteine residue, the peroxidatic cysteine (C(P)), which makes the nucleophilic attack on the peroxide substrate. The peroxide oxidizes the C(P)-SH to cysteine sulfenic acid (C(P)-SOH), which then reacts with another cysteine residue, the resolving cysteine (C(R)), to form a disulfide bridge. The disulfide is subsequently reduced by an appropriate electron donor to complete the catalytic cycle. In this typical 2-Cys peroxiredoxin, C(R) is provided by the other dimeric subunit to form an intersubunit disulfide. The disulfide is subsequently reduced by thioredoxin.</text>
</comment>
<comment type="similarity">
    <text evidence="5">Belongs to the peroxiredoxin family. AhpC/Prx1 subfamily.</text>
</comment>
<reference key="1">
    <citation type="journal article" date="1991" name="J. Bacteriol.">
        <title>Isolation and biochemical and molecular analyses of a species-specific protein antigen from the gastric pathogen Helicobacter pylori.</title>
        <authorList>
            <person name="O'Toole P.W."/>
            <person name="Logan S.M."/>
            <person name="Kostrzynska M."/>
            <person name="Wadstrom T."/>
            <person name="Trust T.J."/>
        </authorList>
    </citation>
    <scope>NUCLEOTIDE SEQUENCE [GENOMIC DNA]</scope>
    <scope>PROTEIN SEQUENCE OF 1-46</scope>
</reference>
<reference key="2">
    <citation type="journal article" date="1997" name="Nature">
        <title>The complete genome sequence of the gastric pathogen Helicobacter pylori.</title>
        <authorList>
            <person name="Tomb J.-F."/>
            <person name="White O."/>
            <person name="Kerlavage A.R."/>
            <person name="Clayton R.A."/>
            <person name="Sutton G.G."/>
            <person name="Fleischmann R.D."/>
            <person name="Ketchum K.A."/>
            <person name="Klenk H.-P."/>
            <person name="Gill S.R."/>
            <person name="Dougherty B.A."/>
            <person name="Nelson K.E."/>
            <person name="Quackenbush J."/>
            <person name="Zhou L."/>
            <person name="Kirkness E.F."/>
            <person name="Peterson S.N."/>
            <person name="Loftus B.J."/>
            <person name="Richardson D.L."/>
            <person name="Dodson R.J."/>
            <person name="Khalak H.G."/>
            <person name="Glodek A."/>
            <person name="McKenney K."/>
            <person name="FitzGerald L.M."/>
            <person name="Lee N."/>
            <person name="Adams M.D."/>
            <person name="Hickey E.K."/>
            <person name="Berg D.E."/>
            <person name="Gocayne J.D."/>
            <person name="Utterback T.R."/>
            <person name="Peterson J.D."/>
            <person name="Kelley J.M."/>
            <person name="Cotton M.D."/>
            <person name="Weidman J.F."/>
            <person name="Fujii C."/>
            <person name="Bowman C."/>
            <person name="Watthey L."/>
            <person name="Wallin E."/>
            <person name="Hayes W.S."/>
            <person name="Borodovsky M."/>
            <person name="Karp P.D."/>
            <person name="Smith H.O."/>
            <person name="Fraser C.M."/>
            <person name="Venter J.C."/>
        </authorList>
    </citation>
    <scope>NUCLEOTIDE SEQUENCE [LARGE SCALE GENOMIC DNA]</scope>
    <source>
        <strain>ATCC 700392 / 26695</strain>
    </source>
</reference>
<accession>P21762</accession>
<keyword id="KW-0049">Antioxidant</keyword>
<keyword id="KW-0963">Cytoplasm</keyword>
<keyword id="KW-0903">Direct protein sequencing</keyword>
<keyword id="KW-1015">Disulfide bond</keyword>
<keyword id="KW-0560">Oxidoreductase</keyword>
<keyword id="KW-0575">Peroxidase</keyword>
<keyword id="KW-0676">Redox-active center</keyword>
<keyword id="KW-1185">Reference proteome</keyword>
<name>AHPC_HELPY</name>
<feature type="chain" id="PRO_0000135144" description="Alkyl hydroperoxide reductase C">
    <location>
        <begin position="1"/>
        <end position="198"/>
    </location>
</feature>
<feature type="domain" description="Thioredoxin" evidence="4">
    <location>
        <begin position="2"/>
        <end position="161"/>
    </location>
</feature>
<feature type="active site" description="Cysteine sulfenic acid (-SOH) intermediate" evidence="3">
    <location>
        <position position="49"/>
    </location>
</feature>
<feature type="disulfide bond" description="Interchain (with C-169)" evidence="3">
    <location>
        <position position="49"/>
    </location>
</feature>
<feature type="disulfide bond" description="Interchain (with C-49)" evidence="3">
    <location>
        <position position="169"/>
    </location>
</feature>
<feature type="sequence conflict" description="In Ref. 1; AAA18984." evidence="5" ref="1">
    <original>A</original>
    <variation>V</variation>
    <location>
        <position position="36"/>
    </location>
</feature>
<feature type="sequence conflict" description="In Ref. 1; AAA18984." evidence="5" ref="1">
    <original>Q</original>
    <variation>H</variation>
    <location>
        <position position="64"/>
    </location>
</feature>
<feature type="sequence conflict" description="In Ref. 1; AAA18984." evidence="5" ref="1">
    <original>T</original>
    <variation>S</variation>
    <location>
        <position position="98"/>
    </location>
</feature>
<proteinExistence type="evidence at protein level"/>
<evidence type="ECO:0000250" key="1">
    <source>
        <dbReference type="UniProtKB" id="P0A251"/>
    </source>
</evidence>
<evidence type="ECO:0000250" key="2">
    <source>
        <dbReference type="UniProtKB" id="P0AE08"/>
    </source>
</evidence>
<evidence type="ECO:0000250" key="3">
    <source>
        <dbReference type="UniProtKB" id="P56876"/>
    </source>
</evidence>
<evidence type="ECO:0000255" key="4">
    <source>
        <dbReference type="PROSITE-ProRule" id="PRU00691"/>
    </source>
</evidence>
<evidence type="ECO:0000305" key="5"/>
<gene>
    <name type="primary">ahpC</name>
    <name type="synonym">tsaA</name>
    <name type="ordered locus">HP_1563</name>
</gene>
<dbReference type="EC" id="1.11.1.26" evidence="1"/>
<dbReference type="EMBL" id="M55507">
    <property type="protein sequence ID" value="AAA18984.1"/>
    <property type="molecule type" value="Unassigned_DNA"/>
</dbReference>
<dbReference type="EMBL" id="AE000511">
    <property type="protein sequence ID" value="AAD08603.1"/>
    <property type="molecule type" value="Genomic_DNA"/>
</dbReference>
<dbReference type="PIR" id="C64715">
    <property type="entry name" value="C64715"/>
</dbReference>
<dbReference type="RefSeq" id="NP_208354.1">
    <property type="nucleotide sequence ID" value="NC_000915.1"/>
</dbReference>
<dbReference type="RefSeq" id="WP_000961643.1">
    <property type="nucleotide sequence ID" value="NC_018939.1"/>
</dbReference>
<dbReference type="SMR" id="P21762"/>
<dbReference type="DIP" id="DIP-3646N"/>
<dbReference type="FunCoup" id="P21762">
    <property type="interactions" value="357"/>
</dbReference>
<dbReference type="IntAct" id="P21762">
    <property type="interactions" value="4"/>
</dbReference>
<dbReference type="MINT" id="P21762"/>
<dbReference type="STRING" id="85962.HP_1563"/>
<dbReference type="PaxDb" id="85962-C694_08100"/>
<dbReference type="DNASU" id="899728"/>
<dbReference type="EnsemblBacteria" id="AAD08603">
    <property type="protein sequence ID" value="AAD08603"/>
    <property type="gene ID" value="HP_1563"/>
</dbReference>
<dbReference type="KEGG" id="heo:C694_08100"/>
<dbReference type="KEGG" id="hpy:HP_1563"/>
<dbReference type="PATRIC" id="fig|85962.47.peg.1680"/>
<dbReference type="eggNOG" id="COG0450">
    <property type="taxonomic scope" value="Bacteria"/>
</dbReference>
<dbReference type="InParanoid" id="P21762"/>
<dbReference type="OrthoDB" id="9812811at2"/>
<dbReference type="PhylomeDB" id="P21762"/>
<dbReference type="BRENDA" id="1.11.1.24">
    <property type="organism ID" value="2604"/>
</dbReference>
<dbReference type="Proteomes" id="UP000000429">
    <property type="component" value="Chromosome"/>
</dbReference>
<dbReference type="GO" id="GO:0005829">
    <property type="term" value="C:cytosol"/>
    <property type="evidence" value="ECO:0000318"/>
    <property type="project" value="GO_Central"/>
</dbReference>
<dbReference type="GO" id="GO:0102039">
    <property type="term" value="F:NADH-dependent peroxiredoxin activity"/>
    <property type="evidence" value="ECO:0007669"/>
    <property type="project" value="UniProtKB-EC"/>
</dbReference>
<dbReference type="GO" id="GO:0008379">
    <property type="term" value="F:thioredoxin peroxidase activity"/>
    <property type="evidence" value="ECO:0000318"/>
    <property type="project" value="GO_Central"/>
</dbReference>
<dbReference type="GO" id="GO:0045454">
    <property type="term" value="P:cell redox homeostasis"/>
    <property type="evidence" value="ECO:0000318"/>
    <property type="project" value="GO_Central"/>
</dbReference>
<dbReference type="GO" id="GO:0042744">
    <property type="term" value="P:hydrogen peroxide catabolic process"/>
    <property type="evidence" value="ECO:0000318"/>
    <property type="project" value="GO_Central"/>
</dbReference>
<dbReference type="GO" id="GO:0006979">
    <property type="term" value="P:response to oxidative stress"/>
    <property type="evidence" value="ECO:0000318"/>
    <property type="project" value="GO_Central"/>
</dbReference>
<dbReference type="CDD" id="cd03015">
    <property type="entry name" value="PRX_Typ2cys"/>
    <property type="match status" value="1"/>
</dbReference>
<dbReference type="FunFam" id="3.40.30.10:FF:000002">
    <property type="entry name" value="Alkyl hydroperoxide reductase C"/>
    <property type="match status" value="1"/>
</dbReference>
<dbReference type="Gene3D" id="3.40.30.10">
    <property type="entry name" value="Glutaredoxin"/>
    <property type="match status" value="1"/>
</dbReference>
<dbReference type="InterPro" id="IPR000866">
    <property type="entry name" value="AhpC/TSA"/>
</dbReference>
<dbReference type="InterPro" id="IPR050217">
    <property type="entry name" value="Peroxiredoxin"/>
</dbReference>
<dbReference type="InterPro" id="IPR024706">
    <property type="entry name" value="Peroxiredoxin_AhpC-typ"/>
</dbReference>
<dbReference type="InterPro" id="IPR019479">
    <property type="entry name" value="Peroxiredoxin_C"/>
</dbReference>
<dbReference type="InterPro" id="IPR036249">
    <property type="entry name" value="Thioredoxin-like_sf"/>
</dbReference>
<dbReference type="InterPro" id="IPR013766">
    <property type="entry name" value="Thioredoxin_domain"/>
</dbReference>
<dbReference type="PANTHER" id="PTHR10681">
    <property type="entry name" value="THIOREDOXIN PEROXIDASE"/>
    <property type="match status" value="1"/>
</dbReference>
<dbReference type="PANTHER" id="PTHR10681:SF128">
    <property type="entry name" value="THIOREDOXIN-DEPENDENT PEROXIDE REDUCTASE, MITOCHONDRIAL"/>
    <property type="match status" value="1"/>
</dbReference>
<dbReference type="Pfam" id="PF10417">
    <property type="entry name" value="1-cysPrx_C"/>
    <property type="match status" value="1"/>
</dbReference>
<dbReference type="Pfam" id="PF00578">
    <property type="entry name" value="AhpC-TSA"/>
    <property type="match status" value="1"/>
</dbReference>
<dbReference type="PIRSF" id="PIRSF000239">
    <property type="entry name" value="AHPC"/>
    <property type="match status" value="1"/>
</dbReference>
<dbReference type="SUPFAM" id="SSF52833">
    <property type="entry name" value="Thioredoxin-like"/>
    <property type="match status" value="1"/>
</dbReference>
<dbReference type="PROSITE" id="PS51352">
    <property type="entry name" value="THIOREDOXIN_2"/>
    <property type="match status" value="1"/>
</dbReference>
<organism>
    <name type="scientific">Helicobacter pylori (strain ATCC 700392 / 26695)</name>
    <name type="common">Campylobacter pylori</name>
    <dbReference type="NCBI Taxonomy" id="85962"/>
    <lineage>
        <taxon>Bacteria</taxon>
        <taxon>Pseudomonadati</taxon>
        <taxon>Campylobacterota</taxon>
        <taxon>Epsilonproteobacteria</taxon>
        <taxon>Campylobacterales</taxon>
        <taxon>Helicobacteraceae</taxon>
        <taxon>Helicobacter</taxon>
    </lineage>
</organism>
<sequence>MLVTKLAPDFKAPAVLGNNEVDEHFELSKNLGKNGAILFFWPKDFTFVCPTEIIAFDKRVKDFQEKGFNVIGVSIDSEQVHFAWKNTPVEKGGIGQVTFPMVADITKSISRDYDVLFEEAIALRGAFLIDKNMKVRHAVINDLPLGRNADEMLRMVDALLHFEEHGEVCPAGWRKGDKGMKATHQGVAEYLKENSIKL</sequence>
<protein>
    <recommendedName>
        <fullName>Alkyl hydroperoxide reductase C</fullName>
        <ecNumber evidence="1">1.11.1.26</ecNumber>
    </recommendedName>
    <alternativeName>
        <fullName>26 kDa antigen</fullName>
    </alternativeName>
    <alternativeName>
        <fullName>Peroxiredoxin</fullName>
    </alternativeName>
    <alternativeName>
        <fullName>Thioredoxin peroxidase</fullName>
    </alternativeName>
</protein>